<name>AK1CD_MESAU</name>
<proteinExistence type="evidence at protein level"/>
<accession>P82809</accession>
<reference key="1">
    <citation type="journal article" date="2000" name="Arch. Biochem. Biophys.">
        <title>Purification and characterization of NAD-dependent morphine 6-dehydrogenase from hamster liver cytosol, a new member of the aldo-keto reductase superfamily.</title>
        <authorList>
            <person name="Todaka T."/>
            <person name="Yamano S."/>
            <person name="Toki S."/>
        </authorList>
    </citation>
    <scope>PROTEIN SEQUENCE</scope>
    <scope>CHARACTERIZATION</scope>
    <source>
        <tissue>Liver</tissue>
    </source>
</reference>
<keyword id="KW-0017">Alkaloid metabolism</keyword>
<keyword id="KW-0903">Direct protein sequencing</keyword>
<keyword id="KW-0520">NAD</keyword>
<keyword id="KW-0521">NADP</keyword>
<keyword id="KW-0560">Oxidoreductase</keyword>
<keyword id="KW-1185">Reference proteome</keyword>
<gene>
    <name type="primary">AKR1C13</name>
</gene>
<protein>
    <recommendedName>
        <fullName>Aldo-keto reductase family 1 member C13</fullName>
        <ecNumber>1.1.1.-</ecNumber>
    </recommendedName>
    <alternativeName>
        <fullName>Morphine 6-dehydrogenase</fullName>
        <ecNumber>1.1.1.218</ecNumber>
    </alternativeName>
</protein>
<organism>
    <name type="scientific">Mesocricetus auratus</name>
    <name type="common">Golden hamster</name>
    <dbReference type="NCBI Taxonomy" id="10036"/>
    <lineage>
        <taxon>Eukaryota</taxon>
        <taxon>Metazoa</taxon>
        <taxon>Chordata</taxon>
        <taxon>Craniata</taxon>
        <taxon>Vertebrata</taxon>
        <taxon>Euteleostomi</taxon>
        <taxon>Mammalia</taxon>
        <taxon>Eutheria</taxon>
        <taxon>Euarchontoglires</taxon>
        <taxon>Glires</taxon>
        <taxon>Rodentia</taxon>
        <taxon>Myomorpha</taxon>
        <taxon>Muroidea</taxon>
        <taxon>Cricetidae</taxon>
        <taxon>Cricetinae</taxon>
        <taxon>Mesocricetus</taxon>
    </lineage>
</organism>
<evidence type="ECO:0000250" key="1"/>
<evidence type="ECO:0000305" key="2"/>
<sequence length="322" mass="36507">XXXXXXXXXXXDGHCIPALGFGTYKPIEVPKSKAMEAANLAIGVGYRHIDTAYAYQIEEEIGQAIQSNIKAGIVKREDMFITTKLWCTCFQPELVRPSLEKXXXKLQLEHVDLFIMHYPVPMKAGDNDFPLDEQGKLLLDTVDFCATWEALEKXXDAGLVKSIGVSNFNMRQLERILNKPGLKYKPVCNQVECHVYNNQSKLLDYCKSKDIVLVAFGALGTQRYKEWVDQDSPVLLNDPVLCGGAKXXXRSPALIALRYLVQRGVVPLAQSFYESEMKENLQVFEFQLSPEDMKILDGLNKNFRYLPAQFFADHPEYPFSEE</sequence>
<comment type="function">
    <text>Catalyzes the dehydrogenation of morphine to morphinone. The enzyme also exhibits significant activity for a variety of cyclic and alicyclic alcohols. In addition to xenobiotics, the enzyme catalyzes the dehydrogenation of 17-beta-hydroxysteroids with much higher affinities than morphine. Uses both NAD and NADP, but the activity is much greater with NAD than with NADP.</text>
</comment>
<comment type="catalytic activity">
    <reaction>
        <text>morphine + NAD(+) = morphinone + NADH + H(+)</text>
        <dbReference type="Rhea" id="RHEA:14317"/>
        <dbReference type="ChEBI" id="CHEBI:15378"/>
        <dbReference type="ChEBI" id="CHEBI:57540"/>
        <dbReference type="ChEBI" id="CHEBI:57728"/>
        <dbReference type="ChEBI" id="CHEBI:57945"/>
        <dbReference type="ChEBI" id="CHEBI:58097"/>
        <dbReference type="EC" id="1.1.1.218"/>
    </reaction>
</comment>
<comment type="catalytic activity">
    <reaction>
        <text>morphine + NADP(+) = morphinone + NADPH + H(+)</text>
        <dbReference type="Rhea" id="RHEA:14321"/>
        <dbReference type="ChEBI" id="CHEBI:15378"/>
        <dbReference type="ChEBI" id="CHEBI:57728"/>
        <dbReference type="ChEBI" id="CHEBI:57783"/>
        <dbReference type="ChEBI" id="CHEBI:58097"/>
        <dbReference type="ChEBI" id="CHEBI:58349"/>
        <dbReference type="EC" id="1.1.1.218"/>
    </reaction>
</comment>
<comment type="activity regulation">
    <text>Strongly inhibited by sulfhydryl reagents and ketamine, but not by pyrazole, barbital and indomethacine.</text>
</comment>
<comment type="biophysicochemical properties">
    <phDependence>
        <text>Optimum pH is 9.3 with NAD as the cofactor.</text>
    </phDependence>
</comment>
<comment type="subunit">
    <text>Monomer.</text>
</comment>
<comment type="PTM">
    <text>The N-terminus is blocked.</text>
</comment>
<comment type="similarity">
    <text evidence="2">Belongs to the aldo/keto reductase family.</text>
</comment>
<dbReference type="EC" id="1.1.1.-"/>
<dbReference type="EC" id="1.1.1.218"/>
<dbReference type="STRING" id="10036.ENSMAUP00000013732"/>
<dbReference type="eggNOG" id="KOG1577">
    <property type="taxonomic scope" value="Eukaryota"/>
</dbReference>
<dbReference type="Proteomes" id="UP000189706">
    <property type="component" value="Unplaced"/>
</dbReference>
<dbReference type="GO" id="GO:0050109">
    <property type="term" value="F:morphine 6-dehydrogenase activity"/>
    <property type="evidence" value="ECO:0007669"/>
    <property type="project" value="UniProtKB-EC"/>
</dbReference>
<dbReference type="GO" id="GO:0009820">
    <property type="term" value="P:alkaloid metabolic process"/>
    <property type="evidence" value="ECO:0007669"/>
    <property type="project" value="UniProtKB-KW"/>
</dbReference>
<dbReference type="CDD" id="cd19108">
    <property type="entry name" value="AKR_AKR1C1-35"/>
    <property type="match status" value="1"/>
</dbReference>
<dbReference type="FunFam" id="3.20.20.100:FF:000003">
    <property type="entry name" value="Aldo-keto reductase family 1 member C3"/>
    <property type="match status" value="1"/>
</dbReference>
<dbReference type="Gene3D" id="3.20.20.100">
    <property type="entry name" value="NADP-dependent oxidoreductase domain"/>
    <property type="match status" value="1"/>
</dbReference>
<dbReference type="InterPro" id="IPR020471">
    <property type="entry name" value="AKR"/>
</dbReference>
<dbReference type="InterPro" id="IPR044482">
    <property type="entry name" value="AKR1C"/>
</dbReference>
<dbReference type="InterPro" id="IPR018170">
    <property type="entry name" value="Aldo/ket_reductase_CS"/>
</dbReference>
<dbReference type="InterPro" id="IPR023210">
    <property type="entry name" value="NADP_OxRdtase_dom"/>
</dbReference>
<dbReference type="InterPro" id="IPR036812">
    <property type="entry name" value="NADP_OxRdtase_dom_sf"/>
</dbReference>
<dbReference type="PANTHER" id="PTHR11732">
    <property type="entry name" value="ALDO/KETO REDUCTASE"/>
    <property type="match status" value="1"/>
</dbReference>
<dbReference type="Pfam" id="PF00248">
    <property type="entry name" value="Aldo_ket_red"/>
    <property type="match status" value="1"/>
</dbReference>
<dbReference type="PIRSF" id="PIRSF000097">
    <property type="entry name" value="AKR"/>
    <property type="match status" value="1"/>
</dbReference>
<dbReference type="PRINTS" id="PR00069">
    <property type="entry name" value="ALDKETRDTASE"/>
</dbReference>
<dbReference type="SUPFAM" id="SSF51430">
    <property type="entry name" value="NAD(P)-linked oxidoreductase"/>
    <property type="match status" value="1"/>
</dbReference>
<dbReference type="PROSITE" id="PS00798">
    <property type="entry name" value="ALDOKETO_REDUCTASE_1"/>
    <property type="match status" value="1"/>
</dbReference>
<dbReference type="PROSITE" id="PS00062">
    <property type="entry name" value="ALDOKETO_REDUCTASE_2"/>
    <property type="match status" value="1"/>
</dbReference>
<feature type="chain" id="PRO_0000124643" description="Aldo-keto reductase family 1 member C13">
    <location>
        <begin position="1"/>
        <end position="322"/>
    </location>
</feature>
<feature type="active site" description="Proton donor" evidence="1">
    <location>
        <position position="55"/>
    </location>
</feature>
<feature type="binding site" evidence="1">
    <location>
        <begin position="20"/>
        <end position="24"/>
    </location>
    <ligand>
        <name>NAD(+)</name>
        <dbReference type="ChEBI" id="CHEBI:57540"/>
    </ligand>
</feature>
<feature type="binding site" evidence="1">
    <location>
        <position position="50"/>
    </location>
    <ligand>
        <name>NAD(+)</name>
        <dbReference type="ChEBI" id="CHEBI:57540"/>
    </ligand>
</feature>
<feature type="binding site" evidence="1">
    <location>
        <position position="117"/>
    </location>
    <ligand>
        <name>substrate</name>
    </ligand>
</feature>
<feature type="binding site" evidence="1">
    <location>
        <begin position="166"/>
        <end position="167"/>
    </location>
    <ligand>
        <name>NAD(+)</name>
        <dbReference type="ChEBI" id="CHEBI:57540"/>
    </ligand>
</feature>
<feature type="binding site" evidence="1">
    <location>
        <position position="190"/>
    </location>
    <ligand>
        <name>NAD(+)</name>
        <dbReference type="ChEBI" id="CHEBI:57540"/>
    </ligand>
</feature>
<feature type="binding site" evidence="1">
    <location>
        <begin position="216"/>
        <end position="224"/>
    </location>
    <ligand>
        <name>NAD(+)</name>
        <dbReference type="ChEBI" id="CHEBI:57540"/>
    </ligand>
</feature>
<feature type="binding site" evidence="1">
    <location>
        <begin position="270"/>
        <end position="280"/>
    </location>
    <ligand>
        <name>NAD(+)</name>
        <dbReference type="ChEBI" id="CHEBI:57540"/>
    </ligand>
</feature>
<feature type="site" description="Lowers pKa of active site Tyr" evidence="1">
    <location>
        <position position="84"/>
    </location>
</feature>